<feature type="chain" id="PRO_0000068185" description="UPF0309 protein SAV_3856">
    <location>
        <begin position="1"/>
        <end position="251"/>
    </location>
</feature>
<feature type="domain" description="SIS" evidence="1">
    <location>
        <begin position="36"/>
        <end position="220"/>
    </location>
</feature>
<gene>
    <name type="ordered locus">SAV_3856</name>
</gene>
<accession>Q82GP1</accession>
<comment type="similarity">
    <text evidence="1">Belongs to the UPF0309 family.</text>
</comment>
<protein>
    <recommendedName>
        <fullName evidence="1">UPF0309 protein SAV_3856</fullName>
    </recommendedName>
</protein>
<keyword id="KW-1185">Reference proteome</keyword>
<sequence length="251" mass="26201">MSESKLAEQFLDAAIGLLQRVRDEDAEPIAAAGTLIADTVADGGRLFAFGAGHSSLAAQDLVYRAGGLALMNLLAVPGVVGVDVMPATLGSALERVDGLASAVLDSSPVRSGDVLVIISLSGRNALPVEMSMNARALGVKVIGVTSVAYASQTRSRHVSGTYLKDHCDIVLDSRIAVGDAELTLDTIEAPFAPASTVVTTALLQAVMATAAGTLADRGIEPPLLRSGNVDGGHDWNDRVMREYGDRIFYRR</sequence>
<reference key="1">
    <citation type="journal article" date="2001" name="Proc. Natl. Acad. Sci. U.S.A.">
        <title>Genome sequence of an industrial microorganism Streptomyces avermitilis: deducing the ability of producing secondary metabolites.</title>
        <authorList>
            <person name="Omura S."/>
            <person name="Ikeda H."/>
            <person name="Ishikawa J."/>
            <person name="Hanamoto A."/>
            <person name="Takahashi C."/>
            <person name="Shinose M."/>
            <person name="Takahashi Y."/>
            <person name="Horikawa H."/>
            <person name="Nakazawa H."/>
            <person name="Osonoe T."/>
            <person name="Kikuchi H."/>
            <person name="Shiba T."/>
            <person name="Sakaki Y."/>
            <person name="Hattori M."/>
        </authorList>
    </citation>
    <scope>NUCLEOTIDE SEQUENCE [LARGE SCALE GENOMIC DNA]</scope>
    <source>
        <strain>ATCC 31267 / DSM 46492 / JCM 5070 / NBRC 14893 / NCIMB 12804 / NRRL 8165 / MA-4680</strain>
    </source>
</reference>
<reference key="2">
    <citation type="journal article" date="2003" name="Nat. Biotechnol.">
        <title>Complete genome sequence and comparative analysis of the industrial microorganism Streptomyces avermitilis.</title>
        <authorList>
            <person name="Ikeda H."/>
            <person name="Ishikawa J."/>
            <person name="Hanamoto A."/>
            <person name="Shinose M."/>
            <person name="Kikuchi H."/>
            <person name="Shiba T."/>
            <person name="Sakaki Y."/>
            <person name="Hattori M."/>
            <person name="Omura S."/>
        </authorList>
    </citation>
    <scope>NUCLEOTIDE SEQUENCE [LARGE SCALE GENOMIC DNA]</scope>
    <source>
        <strain>ATCC 31267 / DSM 46492 / JCM 5070 / NBRC 14893 / NCIMB 12804 / NRRL 8165 / MA-4680</strain>
    </source>
</reference>
<evidence type="ECO:0000255" key="1">
    <source>
        <dbReference type="HAMAP-Rule" id="MF_01240"/>
    </source>
</evidence>
<name>Y3856_STRAW</name>
<dbReference type="EMBL" id="BA000030">
    <property type="protein sequence ID" value="BAC71568.1"/>
    <property type="molecule type" value="Genomic_DNA"/>
</dbReference>
<dbReference type="RefSeq" id="WP_010985287.1">
    <property type="nucleotide sequence ID" value="NZ_JZJK01000090.1"/>
</dbReference>
<dbReference type="SMR" id="Q82GP1"/>
<dbReference type="GeneID" id="41540925"/>
<dbReference type="KEGG" id="sma:SAVERM_3856"/>
<dbReference type="eggNOG" id="COG4821">
    <property type="taxonomic scope" value="Bacteria"/>
</dbReference>
<dbReference type="HOGENOM" id="CLU_089975_0_0_11"/>
<dbReference type="OrthoDB" id="9805185at2"/>
<dbReference type="Proteomes" id="UP000000428">
    <property type="component" value="Chromosome"/>
</dbReference>
<dbReference type="GO" id="GO:0097367">
    <property type="term" value="F:carbohydrate derivative binding"/>
    <property type="evidence" value="ECO:0007669"/>
    <property type="project" value="InterPro"/>
</dbReference>
<dbReference type="GO" id="GO:1901135">
    <property type="term" value="P:carbohydrate derivative metabolic process"/>
    <property type="evidence" value="ECO:0007669"/>
    <property type="project" value="InterPro"/>
</dbReference>
<dbReference type="CDD" id="cd05013">
    <property type="entry name" value="SIS_RpiR"/>
    <property type="match status" value="1"/>
</dbReference>
<dbReference type="Gene3D" id="3.40.50.10490">
    <property type="entry name" value="Glucose-6-phosphate isomerase like protein, domain 1"/>
    <property type="match status" value="1"/>
</dbReference>
<dbReference type="HAMAP" id="MF_01240">
    <property type="entry name" value="UPF0309"/>
    <property type="match status" value="1"/>
</dbReference>
<dbReference type="InterPro" id="IPR035472">
    <property type="entry name" value="RpiR-like_SIS"/>
</dbReference>
<dbReference type="InterPro" id="IPR001347">
    <property type="entry name" value="SIS_dom"/>
</dbReference>
<dbReference type="InterPro" id="IPR046348">
    <property type="entry name" value="SIS_dom_sf"/>
</dbReference>
<dbReference type="InterPro" id="IPR050099">
    <property type="entry name" value="SIS_GmhA/DiaA_subfam"/>
</dbReference>
<dbReference type="InterPro" id="IPR022951">
    <property type="entry name" value="UPF0309"/>
</dbReference>
<dbReference type="NCBIfam" id="NF002805">
    <property type="entry name" value="PRK02947.1"/>
    <property type="match status" value="1"/>
</dbReference>
<dbReference type="PANTHER" id="PTHR30390:SF7">
    <property type="entry name" value="PHOSPHOHEPTOSE ISOMERASE"/>
    <property type="match status" value="1"/>
</dbReference>
<dbReference type="PANTHER" id="PTHR30390">
    <property type="entry name" value="SEDOHEPTULOSE 7-PHOSPHATE ISOMERASE / DNAA INITIATOR-ASSOCIATING FACTOR FOR REPLICATION INITIATION"/>
    <property type="match status" value="1"/>
</dbReference>
<dbReference type="Pfam" id="PF13580">
    <property type="entry name" value="SIS_2"/>
    <property type="match status" value="1"/>
</dbReference>
<dbReference type="SUPFAM" id="SSF53697">
    <property type="entry name" value="SIS domain"/>
    <property type="match status" value="1"/>
</dbReference>
<dbReference type="PROSITE" id="PS51464">
    <property type="entry name" value="SIS"/>
    <property type="match status" value="1"/>
</dbReference>
<proteinExistence type="inferred from homology"/>
<organism>
    <name type="scientific">Streptomyces avermitilis (strain ATCC 31267 / DSM 46492 / JCM 5070 / NBRC 14893 / NCIMB 12804 / NRRL 8165 / MA-4680)</name>
    <dbReference type="NCBI Taxonomy" id="227882"/>
    <lineage>
        <taxon>Bacteria</taxon>
        <taxon>Bacillati</taxon>
        <taxon>Actinomycetota</taxon>
        <taxon>Actinomycetes</taxon>
        <taxon>Kitasatosporales</taxon>
        <taxon>Streptomycetaceae</taxon>
        <taxon>Streptomyces</taxon>
    </lineage>
</organism>